<feature type="chain" id="PRO_0000374946" description="Ribosomal protein uS12 methylthiotransferase RimO">
    <location>
        <begin position="1"/>
        <end position="445"/>
    </location>
</feature>
<feature type="domain" description="MTTase N-terminal" evidence="1">
    <location>
        <begin position="10"/>
        <end position="120"/>
    </location>
</feature>
<feature type="domain" description="Radical SAM core" evidence="2">
    <location>
        <begin position="139"/>
        <end position="378"/>
    </location>
</feature>
<feature type="domain" description="TRAM" evidence="1">
    <location>
        <begin position="380"/>
        <end position="445"/>
    </location>
</feature>
<feature type="binding site" evidence="1">
    <location>
        <position position="19"/>
    </location>
    <ligand>
        <name>[4Fe-4S] cluster</name>
        <dbReference type="ChEBI" id="CHEBI:49883"/>
        <label>1</label>
    </ligand>
</feature>
<feature type="binding site" evidence="1">
    <location>
        <position position="55"/>
    </location>
    <ligand>
        <name>[4Fe-4S] cluster</name>
        <dbReference type="ChEBI" id="CHEBI:49883"/>
        <label>1</label>
    </ligand>
</feature>
<feature type="binding site" evidence="1">
    <location>
        <position position="84"/>
    </location>
    <ligand>
        <name>[4Fe-4S] cluster</name>
        <dbReference type="ChEBI" id="CHEBI:49883"/>
        <label>1</label>
    </ligand>
</feature>
<feature type="binding site" evidence="1">
    <location>
        <position position="153"/>
    </location>
    <ligand>
        <name>[4Fe-4S] cluster</name>
        <dbReference type="ChEBI" id="CHEBI:49883"/>
        <label>2</label>
        <note>4Fe-4S-S-AdoMet</note>
    </ligand>
</feature>
<feature type="binding site" evidence="1">
    <location>
        <position position="157"/>
    </location>
    <ligand>
        <name>[4Fe-4S] cluster</name>
        <dbReference type="ChEBI" id="CHEBI:49883"/>
        <label>2</label>
        <note>4Fe-4S-S-AdoMet</note>
    </ligand>
</feature>
<feature type="binding site" evidence="1">
    <location>
        <position position="160"/>
    </location>
    <ligand>
        <name>[4Fe-4S] cluster</name>
        <dbReference type="ChEBI" id="CHEBI:49883"/>
        <label>2</label>
        <note>4Fe-4S-S-AdoMet</note>
    </ligand>
</feature>
<sequence length="445" mass="49559">MSTTPAPANPKVGFVSLGCPKALVDSERILTQLRMEGYDVVSTYQDADVVVVNTCGFIDSAKAESLEVIGEAIKENGKVIVTGCMGVEEGNIRDVHPSVLAVTGPQQYEQVVNAVHEVVPPKQDHNPLIDLVPPQGIKLTPRHYAYLKISEGCNHSCSFCIIPSMRGKLVSRPVGDVLDEAQRLVKSGVKELLVISQDTSAYGVDVKYRTGFWNGAPVKTRMTELCEALSTLGVWVRLHYVYPYPHVDELIPLMAAGKILPYLDIPFQHASPKVLKSMKRPAFEDKTLARIKNWREICPDLIIRSTFIVGFPGETEEDFQYLLDWLTEAQLDRVGCFQYSPVEGAPANDLDLEVVPDDVKQDRWERFMAHQQAISSARLQLRIGREIEVLVDEVDEQGAVGRCFFDAPEIDGNVFIDNGSNLKPGDKVWCKVTDADEYDLWAEQI</sequence>
<comment type="function">
    <text evidence="1">Catalyzes the methylthiolation of an aspartic acid residue of ribosomal protein uS12.</text>
</comment>
<comment type="catalytic activity">
    <reaction evidence="1">
        <text>L-aspartate(89)-[ribosomal protein uS12]-hydrogen + (sulfur carrier)-SH + AH2 + 2 S-adenosyl-L-methionine = 3-methylsulfanyl-L-aspartate(89)-[ribosomal protein uS12]-hydrogen + (sulfur carrier)-H + 5'-deoxyadenosine + L-methionine + A + S-adenosyl-L-homocysteine + 2 H(+)</text>
        <dbReference type="Rhea" id="RHEA:37087"/>
        <dbReference type="Rhea" id="RHEA-COMP:10460"/>
        <dbReference type="Rhea" id="RHEA-COMP:10461"/>
        <dbReference type="Rhea" id="RHEA-COMP:14737"/>
        <dbReference type="Rhea" id="RHEA-COMP:14739"/>
        <dbReference type="ChEBI" id="CHEBI:13193"/>
        <dbReference type="ChEBI" id="CHEBI:15378"/>
        <dbReference type="ChEBI" id="CHEBI:17319"/>
        <dbReference type="ChEBI" id="CHEBI:17499"/>
        <dbReference type="ChEBI" id="CHEBI:29917"/>
        <dbReference type="ChEBI" id="CHEBI:29961"/>
        <dbReference type="ChEBI" id="CHEBI:57844"/>
        <dbReference type="ChEBI" id="CHEBI:57856"/>
        <dbReference type="ChEBI" id="CHEBI:59789"/>
        <dbReference type="ChEBI" id="CHEBI:64428"/>
        <dbReference type="ChEBI" id="CHEBI:73599"/>
        <dbReference type="EC" id="2.8.4.4"/>
    </reaction>
</comment>
<comment type="cofactor">
    <cofactor evidence="1">
        <name>[4Fe-4S] cluster</name>
        <dbReference type="ChEBI" id="CHEBI:49883"/>
    </cofactor>
    <text evidence="1">Binds 2 [4Fe-4S] clusters. One cluster is coordinated with 3 cysteines and an exchangeable S-adenosyl-L-methionine.</text>
</comment>
<comment type="subcellular location">
    <subcellularLocation>
        <location evidence="1">Cytoplasm</location>
    </subcellularLocation>
</comment>
<comment type="similarity">
    <text evidence="1">Belongs to the methylthiotransferase family. RimO subfamily.</text>
</comment>
<keyword id="KW-0004">4Fe-4S</keyword>
<keyword id="KW-0963">Cytoplasm</keyword>
<keyword id="KW-0408">Iron</keyword>
<keyword id="KW-0411">Iron-sulfur</keyword>
<keyword id="KW-0479">Metal-binding</keyword>
<keyword id="KW-0949">S-adenosyl-L-methionine</keyword>
<keyword id="KW-0808">Transferase</keyword>
<proteinExistence type="inferred from homology"/>
<accession>Q3KH22</accession>
<dbReference type="EC" id="2.8.4.4" evidence="1"/>
<dbReference type="EMBL" id="CP000094">
    <property type="protein sequence ID" value="ABA72934.1"/>
    <property type="molecule type" value="Genomic_DNA"/>
</dbReference>
<dbReference type="RefSeq" id="WP_011332753.1">
    <property type="nucleotide sequence ID" value="NC_007492.2"/>
</dbReference>
<dbReference type="SMR" id="Q3KH22"/>
<dbReference type="KEGG" id="pfo:Pfl01_1191"/>
<dbReference type="eggNOG" id="COG0621">
    <property type="taxonomic scope" value="Bacteria"/>
</dbReference>
<dbReference type="HOGENOM" id="CLU_018697_0_0_6"/>
<dbReference type="Proteomes" id="UP000002704">
    <property type="component" value="Chromosome"/>
</dbReference>
<dbReference type="GO" id="GO:0005829">
    <property type="term" value="C:cytosol"/>
    <property type="evidence" value="ECO:0007669"/>
    <property type="project" value="TreeGrafter"/>
</dbReference>
<dbReference type="GO" id="GO:0051539">
    <property type="term" value="F:4 iron, 4 sulfur cluster binding"/>
    <property type="evidence" value="ECO:0007669"/>
    <property type="project" value="UniProtKB-UniRule"/>
</dbReference>
<dbReference type="GO" id="GO:0035599">
    <property type="term" value="F:aspartic acid methylthiotransferase activity"/>
    <property type="evidence" value="ECO:0007669"/>
    <property type="project" value="TreeGrafter"/>
</dbReference>
<dbReference type="GO" id="GO:0046872">
    <property type="term" value="F:metal ion binding"/>
    <property type="evidence" value="ECO:0007669"/>
    <property type="project" value="UniProtKB-KW"/>
</dbReference>
<dbReference type="GO" id="GO:0103039">
    <property type="term" value="F:protein methylthiotransferase activity"/>
    <property type="evidence" value="ECO:0007669"/>
    <property type="project" value="UniProtKB-EC"/>
</dbReference>
<dbReference type="GO" id="GO:0006400">
    <property type="term" value="P:tRNA modification"/>
    <property type="evidence" value="ECO:0007669"/>
    <property type="project" value="InterPro"/>
</dbReference>
<dbReference type="CDD" id="cd01335">
    <property type="entry name" value="Radical_SAM"/>
    <property type="match status" value="1"/>
</dbReference>
<dbReference type="FunFam" id="2.40.50.140:FF:000060">
    <property type="entry name" value="Ribosomal protein S12 methylthiotransferase RimO"/>
    <property type="match status" value="1"/>
</dbReference>
<dbReference type="FunFam" id="3.40.50.12160:FF:000002">
    <property type="entry name" value="Ribosomal protein S12 methylthiotransferase RimO"/>
    <property type="match status" value="1"/>
</dbReference>
<dbReference type="FunFam" id="3.80.30.20:FF:000001">
    <property type="entry name" value="tRNA-2-methylthio-N(6)-dimethylallyladenosine synthase 2"/>
    <property type="match status" value="1"/>
</dbReference>
<dbReference type="Gene3D" id="3.40.50.12160">
    <property type="entry name" value="Methylthiotransferase, N-terminal domain"/>
    <property type="match status" value="1"/>
</dbReference>
<dbReference type="Gene3D" id="2.40.50.140">
    <property type="entry name" value="Nucleic acid-binding proteins"/>
    <property type="match status" value="1"/>
</dbReference>
<dbReference type="Gene3D" id="3.80.30.20">
    <property type="entry name" value="tm_1862 like domain"/>
    <property type="match status" value="1"/>
</dbReference>
<dbReference type="HAMAP" id="MF_01865">
    <property type="entry name" value="MTTase_RimO"/>
    <property type="match status" value="1"/>
</dbReference>
<dbReference type="InterPro" id="IPR006638">
    <property type="entry name" value="Elp3/MiaA/NifB-like_rSAM"/>
</dbReference>
<dbReference type="InterPro" id="IPR005839">
    <property type="entry name" value="Methylthiotransferase"/>
</dbReference>
<dbReference type="InterPro" id="IPR020612">
    <property type="entry name" value="Methylthiotransferase_CS"/>
</dbReference>
<dbReference type="InterPro" id="IPR013848">
    <property type="entry name" value="Methylthiotransferase_N"/>
</dbReference>
<dbReference type="InterPro" id="IPR038135">
    <property type="entry name" value="Methylthiotransferase_N_sf"/>
</dbReference>
<dbReference type="InterPro" id="IPR012340">
    <property type="entry name" value="NA-bd_OB-fold"/>
</dbReference>
<dbReference type="InterPro" id="IPR005840">
    <property type="entry name" value="Ribosomal_uS12_MeSTrfase_RimO"/>
</dbReference>
<dbReference type="InterPro" id="IPR007197">
    <property type="entry name" value="rSAM"/>
</dbReference>
<dbReference type="InterPro" id="IPR023404">
    <property type="entry name" value="rSAM_horseshoe"/>
</dbReference>
<dbReference type="InterPro" id="IPR002792">
    <property type="entry name" value="TRAM_dom"/>
</dbReference>
<dbReference type="NCBIfam" id="TIGR01125">
    <property type="entry name" value="30S ribosomal protein S12 methylthiotransferase RimO"/>
    <property type="match status" value="1"/>
</dbReference>
<dbReference type="NCBIfam" id="TIGR00089">
    <property type="entry name" value="MiaB/RimO family radical SAM methylthiotransferase"/>
    <property type="match status" value="1"/>
</dbReference>
<dbReference type="PANTHER" id="PTHR43837">
    <property type="entry name" value="RIBOSOMAL PROTEIN S12 METHYLTHIOTRANSFERASE RIMO"/>
    <property type="match status" value="1"/>
</dbReference>
<dbReference type="PANTHER" id="PTHR43837:SF1">
    <property type="entry name" value="RIBOSOMAL PROTEIN US12 METHYLTHIOTRANSFERASE RIMO"/>
    <property type="match status" value="1"/>
</dbReference>
<dbReference type="Pfam" id="PF04055">
    <property type="entry name" value="Radical_SAM"/>
    <property type="match status" value="1"/>
</dbReference>
<dbReference type="Pfam" id="PF18693">
    <property type="entry name" value="TRAM_2"/>
    <property type="match status" value="1"/>
</dbReference>
<dbReference type="Pfam" id="PF00919">
    <property type="entry name" value="UPF0004"/>
    <property type="match status" value="1"/>
</dbReference>
<dbReference type="SFLD" id="SFLDG01082">
    <property type="entry name" value="B12-binding_domain_containing"/>
    <property type="match status" value="1"/>
</dbReference>
<dbReference type="SFLD" id="SFLDS00029">
    <property type="entry name" value="Radical_SAM"/>
    <property type="match status" value="1"/>
</dbReference>
<dbReference type="SFLD" id="SFLDF00274">
    <property type="entry name" value="ribosomal_protein_S12_methylth"/>
    <property type="match status" value="1"/>
</dbReference>
<dbReference type="SMART" id="SM00729">
    <property type="entry name" value="Elp3"/>
    <property type="match status" value="1"/>
</dbReference>
<dbReference type="SUPFAM" id="SSF102114">
    <property type="entry name" value="Radical SAM enzymes"/>
    <property type="match status" value="1"/>
</dbReference>
<dbReference type="PROSITE" id="PS51449">
    <property type="entry name" value="MTTASE_N"/>
    <property type="match status" value="1"/>
</dbReference>
<dbReference type="PROSITE" id="PS01278">
    <property type="entry name" value="MTTASE_RADICAL"/>
    <property type="match status" value="1"/>
</dbReference>
<dbReference type="PROSITE" id="PS51918">
    <property type="entry name" value="RADICAL_SAM"/>
    <property type="match status" value="1"/>
</dbReference>
<dbReference type="PROSITE" id="PS50926">
    <property type="entry name" value="TRAM"/>
    <property type="match status" value="1"/>
</dbReference>
<organism>
    <name type="scientific">Pseudomonas fluorescens (strain Pf0-1)</name>
    <dbReference type="NCBI Taxonomy" id="205922"/>
    <lineage>
        <taxon>Bacteria</taxon>
        <taxon>Pseudomonadati</taxon>
        <taxon>Pseudomonadota</taxon>
        <taxon>Gammaproteobacteria</taxon>
        <taxon>Pseudomonadales</taxon>
        <taxon>Pseudomonadaceae</taxon>
        <taxon>Pseudomonas</taxon>
    </lineage>
</organism>
<reference key="1">
    <citation type="journal article" date="2009" name="Genome Biol.">
        <title>Genomic and genetic analyses of diversity and plant interactions of Pseudomonas fluorescens.</title>
        <authorList>
            <person name="Silby M.W."/>
            <person name="Cerdeno-Tarraga A.M."/>
            <person name="Vernikos G.S."/>
            <person name="Giddens S.R."/>
            <person name="Jackson R.W."/>
            <person name="Preston G.M."/>
            <person name="Zhang X.-X."/>
            <person name="Moon C.D."/>
            <person name="Gehrig S.M."/>
            <person name="Godfrey S.A.C."/>
            <person name="Knight C.G."/>
            <person name="Malone J.G."/>
            <person name="Robinson Z."/>
            <person name="Spiers A.J."/>
            <person name="Harris S."/>
            <person name="Challis G.L."/>
            <person name="Yaxley A.M."/>
            <person name="Harris D."/>
            <person name="Seeger K."/>
            <person name="Murphy L."/>
            <person name="Rutter S."/>
            <person name="Squares R."/>
            <person name="Quail M.A."/>
            <person name="Saunders E."/>
            <person name="Mavromatis K."/>
            <person name="Brettin T.S."/>
            <person name="Bentley S.D."/>
            <person name="Hothersall J."/>
            <person name="Stephens E."/>
            <person name="Thomas C.M."/>
            <person name="Parkhill J."/>
            <person name="Levy S.B."/>
            <person name="Rainey P.B."/>
            <person name="Thomson N.R."/>
        </authorList>
    </citation>
    <scope>NUCLEOTIDE SEQUENCE [LARGE SCALE GENOMIC DNA]</scope>
    <source>
        <strain>Pf0-1</strain>
    </source>
</reference>
<name>RIMO_PSEPF</name>
<evidence type="ECO:0000255" key="1">
    <source>
        <dbReference type="HAMAP-Rule" id="MF_01865"/>
    </source>
</evidence>
<evidence type="ECO:0000255" key="2">
    <source>
        <dbReference type="PROSITE-ProRule" id="PRU01266"/>
    </source>
</evidence>
<protein>
    <recommendedName>
        <fullName evidence="1">Ribosomal protein uS12 methylthiotransferase RimO</fullName>
        <shortName evidence="1">uS12 MTTase</shortName>
        <shortName evidence="1">uS12 methylthiotransferase</shortName>
        <ecNumber evidence="1">2.8.4.4</ecNumber>
    </recommendedName>
    <alternativeName>
        <fullName evidence="1">Ribosomal protein uS12 (aspartate-C(3))-methylthiotransferase</fullName>
    </alternativeName>
    <alternativeName>
        <fullName evidence="1">Ribosome maturation factor RimO</fullName>
    </alternativeName>
</protein>
<gene>
    <name evidence="1" type="primary">rimO</name>
    <name type="ordered locus">Pfl01_1191</name>
</gene>